<feature type="signal peptide" evidence="1">
    <location>
        <begin position="1"/>
        <end position="22"/>
    </location>
</feature>
<feature type="chain" id="PRO_0000282077" description="Uncharacterized lipoprotein SAUSA300_0411">
    <location>
        <begin position="23"/>
        <end position="266"/>
    </location>
</feature>
<feature type="lipid moiety-binding region" description="N-palmitoyl cysteine" evidence="1">
    <location>
        <position position="23"/>
    </location>
</feature>
<feature type="lipid moiety-binding region" description="S-diacylglycerol cysteine" evidence="1">
    <location>
        <position position="23"/>
    </location>
</feature>
<name>Y411_STAA3</name>
<gene>
    <name type="ordered locus">SAUSA300_0411</name>
</gene>
<organism>
    <name type="scientific">Staphylococcus aureus (strain USA300)</name>
    <dbReference type="NCBI Taxonomy" id="367830"/>
    <lineage>
        <taxon>Bacteria</taxon>
        <taxon>Bacillati</taxon>
        <taxon>Bacillota</taxon>
        <taxon>Bacilli</taxon>
        <taxon>Bacillales</taxon>
        <taxon>Staphylococcaceae</taxon>
        <taxon>Staphylococcus</taxon>
    </lineage>
</organism>
<accession>Q2FJK3</accession>
<dbReference type="EMBL" id="CP000255">
    <property type="protein sequence ID" value="ABD21179.1"/>
    <property type="molecule type" value="Genomic_DNA"/>
</dbReference>
<dbReference type="SMR" id="Q2FJK3"/>
<dbReference type="KEGG" id="saa:SAUSA300_0411"/>
<dbReference type="HOGENOM" id="CLU_071589_0_1_9"/>
<dbReference type="Proteomes" id="UP000001939">
    <property type="component" value="Chromosome"/>
</dbReference>
<dbReference type="GO" id="GO:0005886">
    <property type="term" value="C:plasma membrane"/>
    <property type="evidence" value="ECO:0007669"/>
    <property type="project" value="UniProtKB-SubCell"/>
</dbReference>
<dbReference type="Gene3D" id="2.50.20.40">
    <property type="match status" value="1"/>
</dbReference>
<dbReference type="InterPro" id="IPR007595">
    <property type="entry name" value="Csa"/>
</dbReference>
<dbReference type="InterPro" id="IPR038641">
    <property type="entry name" value="Csa_sf"/>
</dbReference>
<dbReference type="NCBIfam" id="TIGR01742">
    <property type="entry name" value="SA_tandem_lipo"/>
    <property type="match status" value="1"/>
</dbReference>
<dbReference type="Pfam" id="PF04507">
    <property type="entry name" value="DUF576"/>
    <property type="match status" value="1"/>
</dbReference>
<dbReference type="PROSITE" id="PS51257">
    <property type="entry name" value="PROKAR_LIPOPROTEIN"/>
    <property type="match status" value="1"/>
</dbReference>
<protein>
    <recommendedName>
        <fullName>Uncharacterized lipoprotein SAUSA300_0411</fullName>
    </recommendedName>
</protein>
<comment type="subcellular location">
    <subcellularLocation>
        <location evidence="1">Cell membrane</location>
        <topology evidence="1">Lipid-anchor</topology>
    </subcellularLocation>
</comment>
<comment type="similarity">
    <text evidence="2">Belongs to the staphylococcal tandem lipoprotein family.</text>
</comment>
<proteinExistence type="inferred from homology"/>
<reference key="1">
    <citation type="journal article" date="2006" name="Lancet">
        <title>Complete genome sequence of USA300, an epidemic clone of community-acquired meticillin-resistant Staphylococcus aureus.</title>
        <authorList>
            <person name="Diep B.A."/>
            <person name="Gill S.R."/>
            <person name="Chang R.F."/>
            <person name="Phan T.H."/>
            <person name="Chen J.H."/>
            <person name="Davidson M.G."/>
            <person name="Lin F."/>
            <person name="Lin J."/>
            <person name="Carleton H.A."/>
            <person name="Mongodin E.F."/>
            <person name="Sensabaugh G.F."/>
            <person name="Perdreau-Remington F."/>
        </authorList>
    </citation>
    <scope>NUCLEOTIDE SEQUENCE [LARGE SCALE GENOMIC DNA]</scope>
    <source>
        <strain>USA300</strain>
    </source>
</reference>
<sequence>MRYLKKLAWFISVIILGIFIIGCDSSSDTGEKAKEDSKEEQIKKSFAKTLDMYPIKNLEDLYDKEGYRDSEFKKGDKGMWMIYTDFAKSNKPGVLDNEGMILNLDRNTRTAKGYYFVDTIYDNHENSYSKNYRVEMKNNKIILLDKVEDQKLKERIENFKFFGQYADFKSLKSYNNGDVSINSNVPSYDAKFKMSNKDENVKQLRSRYNIPTEKAPILKMHIDGDLKGSSVGYKKLEIDFSKEENSELSVVDSLNFQPAKKNKDDE</sequence>
<evidence type="ECO:0000255" key="1">
    <source>
        <dbReference type="PROSITE-ProRule" id="PRU00303"/>
    </source>
</evidence>
<evidence type="ECO:0000305" key="2"/>
<keyword id="KW-1003">Cell membrane</keyword>
<keyword id="KW-0449">Lipoprotein</keyword>
<keyword id="KW-0472">Membrane</keyword>
<keyword id="KW-0564">Palmitate</keyword>
<keyword id="KW-0732">Signal</keyword>